<reference key="1">
    <citation type="journal article" date="2009" name="Science">
        <title>The dynamics and time scale of ongoing genomic erosion in symbiotic bacteria.</title>
        <authorList>
            <person name="Moran N.A."/>
            <person name="McLaughlin H.J."/>
            <person name="Sorek R."/>
        </authorList>
    </citation>
    <scope>NUCLEOTIDE SEQUENCE [LARGE SCALE GENOMIC DNA]</scope>
    <source>
        <strain>5A</strain>
    </source>
</reference>
<keyword id="KW-0456">Lyase</keyword>
<keyword id="KW-0460">Magnesium</keyword>
<keyword id="KW-0464">Manganese</keyword>
<keyword id="KW-0479">Metal-binding</keyword>
<keyword id="KW-0686">Riboflavin biosynthesis</keyword>
<proteinExistence type="inferred from homology"/>
<gene>
    <name evidence="1" type="primary">ribB</name>
    <name type="ordered locus">BUAP5A_058</name>
</gene>
<feature type="chain" id="PRO_1000193752" description="3,4-dihydroxy-2-butanone 4-phosphate synthase">
    <location>
        <begin position="1"/>
        <end position="215"/>
    </location>
</feature>
<feature type="binding site" evidence="1">
    <location>
        <begin position="37"/>
        <end position="38"/>
    </location>
    <ligand>
        <name>D-ribulose 5-phosphate</name>
        <dbReference type="ChEBI" id="CHEBI:58121"/>
    </ligand>
</feature>
<feature type="binding site" evidence="1">
    <location>
        <position position="38"/>
    </location>
    <ligand>
        <name>Mg(2+)</name>
        <dbReference type="ChEBI" id="CHEBI:18420"/>
        <label>1</label>
    </ligand>
</feature>
<feature type="binding site" evidence="1">
    <location>
        <position position="38"/>
    </location>
    <ligand>
        <name>Mg(2+)</name>
        <dbReference type="ChEBI" id="CHEBI:18420"/>
        <label>2</label>
    </ligand>
</feature>
<feature type="binding site" evidence="1">
    <location>
        <position position="42"/>
    </location>
    <ligand>
        <name>D-ribulose 5-phosphate</name>
        <dbReference type="ChEBI" id="CHEBI:58121"/>
    </ligand>
</feature>
<feature type="binding site" evidence="1">
    <location>
        <begin position="150"/>
        <end position="154"/>
    </location>
    <ligand>
        <name>D-ribulose 5-phosphate</name>
        <dbReference type="ChEBI" id="CHEBI:58121"/>
    </ligand>
</feature>
<feature type="binding site" evidence="1">
    <location>
        <position position="153"/>
    </location>
    <ligand>
        <name>Mg(2+)</name>
        <dbReference type="ChEBI" id="CHEBI:18420"/>
        <label>2</label>
    </ligand>
</feature>
<feature type="binding site" evidence="1">
    <location>
        <position position="174"/>
    </location>
    <ligand>
        <name>D-ribulose 5-phosphate</name>
        <dbReference type="ChEBI" id="CHEBI:58121"/>
    </ligand>
</feature>
<feature type="site" description="Essential for catalytic activity" evidence="1">
    <location>
        <position position="136"/>
    </location>
</feature>
<feature type="site" description="Essential for catalytic activity" evidence="1">
    <location>
        <position position="174"/>
    </location>
</feature>
<comment type="function">
    <text evidence="1">Catalyzes the conversion of D-ribulose 5-phosphate to formate and 3,4-dihydroxy-2-butanone 4-phosphate.</text>
</comment>
<comment type="catalytic activity">
    <reaction evidence="1">
        <text>D-ribulose 5-phosphate = (2S)-2-hydroxy-3-oxobutyl phosphate + formate + H(+)</text>
        <dbReference type="Rhea" id="RHEA:18457"/>
        <dbReference type="ChEBI" id="CHEBI:15378"/>
        <dbReference type="ChEBI" id="CHEBI:15740"/>
        <dbReference type="ChEBI" id="CHEBI:58121"/>
        <dbReference type="ChEBI" id="CHEBI:58830"/>
        <dbReference type="EC" id="4.1.99.12"/>
    </reaction>
</comment>
<comment type="cofactor">
    <cofactor evidence="1">
        <name>Mg(2+)</name>
        <dbReference type="ChEBI" id="CHEBI:18420"/>
    </cofactor>
    <cofactor evidence="1">
        <name>Mn(2+)</name>
        <dbReference type="ChEBI" id="CHEBI:29035"/>
    </cofactor>
    <text evidence="1">Binds 2 divalent metal cations per subunit. Magnesium or manganese.</text>
</comment>
<comment type="pathway">
    <text evidence="1">Cofactor biosynthesis; riboflavin biosynthesis; 2-hydroxy-3-oxobutyl phosphate from D-ribulose 5-phosphate: step 1/1.</text>
</comment>
<comment type="subunit">
    <text evidence="1">Homodimer.</text>
</comment>
<comment type="similarity">
    <text evidence="1">Belongs to the DHBP synthase family.</text>
</comment>
<organism>
    <name type="scientific">Buchnera aphidicola subsp. Acyrthosiphon pisum (strain 5A)</name>
    <dbReference type="NCBI Taxonomy" id="563178"/>
    <lineage>
        <taxon>Bacteria</taxon>
        <taxon>Pseudomonadati</taxon>
        <taxon>Pseudomonadota</taxon>
        <taxon>Gammaproteobacteria</taxon>
        <taxon>Enterobacterales</taxon>
        <taxon>Erwiniaceae</taxon>
        <taxon>Buchnera</taxon>
    </lineage>
</organism>
<dbReference type="EC" id="4.1.99.12" evidence="1"/>
<dbReference type="EMBL" id="CP001161">
    <property type="protein sequence ID" value="ACL30439.1"/>
    <property type="molecule type" value="Genomic_DNA"/>
</dbReference>
<dbReference type="RefSeq" id="WP_009874016.1">
    <property type="nucleotide sequence ID" value="NC_011833.1"/>
</dbReference>
<dbReference type="SMR" id="B8D8L7"/>
<dbReference type="KEGG" id="bap:BUAP5A_058"/>
<dbReference type="HOGENOM" id="CLU_020273_3_0_6"/>
<dbReference type="OrthoDB" id="9793111at2"/>
<dbReference type="UniPathway" id="UPA00275">
    <property type="reaction ID" value="UER00399"/>
</dbReference>
<dbReference type="Proteomes" id="UP000006904">
    <property type="component" value="Chromosome"/>
</dbReference>
<dbReference type="GO" id="GO:0005829">
    <property type="term" value="C:cytosol"/>
    <property type="evidence" value="ECO:0007669"/>
    <property type="project" value="TreeGrafter"/>
</dbReference>
<dbReference type="GO" id="GO:0008686">
    <property type="term" value="F:3,4-dihydroxy-2-butanone-4-phosphate synthase activity"/>
    <property type="evidence" value="ECO:0007669"/>
    <property type="project" value="UniProtKB-UniRule"/>
</dbReference>
<dbReference type="GO" id="GO:0000287">
    <property type="term" value="F:magnesium ion binding"/>
    <property type="evidence" value="ECO:0007669"/>
    <property type="project" value="UniProtKB-UniRule"/>
</dbReference>
<dbReference type="GO" id="GO:0030145">
    <property type="term" value="F:manganese ion binding"/>
    <property type="evidence" value="ECO:0007669"/>
    <property type="project" value="UniProtKB-UniRule"/>
</dbReference>
<dbReference type="GO" id="GO:0009231">
    <property type="term" value="P:riboflavin biosynthetic process"/>
    <property type="evidence" value="ECO:0007669"/>
    <property type="project" value="UniProtKB-UniRule"/>
</dbReference>
<dbReference type="FunFam" id="3.90.870.10:FF:000002">
    <property type="entry name" value="3,4-dihydroxy-2-butanone 4-phosphate synthase"/>
    <property type="match status" value="1"/>
</dbReference>
<dbReference type="Gene3D" id="3.90.870.10">
    <property type="entry name" value="DHBP synthase"/>
    <property type="match status" value="1"/>
</dbReference>
<dbReference type="HAMAP" id="MF_00180">
    <property type="entry name" value="RibB"/>
    <property type="match status" value="1"/>
</dbReference>
<dbReference type="InterPro" id="IPR017945">
    <property type="entry name" value="DHBP_synth_RibB-like_a/b_dom"/>
</dbReference>
<dbReference type="InterPro" id="IPR000422">
    <property type="entry name" value="DHBP_synthase_RibB"/>
</dbReference>
<dbReference type="NCBIfam" id="TIGR00506">
    <property type="entry name" value="ribB"/>
    <property type="match status" value="1"/>
</dbReference>
<dbReference type="PANTHER" id="PTHR21327:SF38">
    <property type="entry name" value="3,4-DIHYDROXY-2-BUTANONE 4-PHOSPHATE SYNTHASE"/>
    <property type="match status" value="1"/>
</dbReference>
<dbReference type="PANTHER" id="PTHR21327">
    <property type="entry name" value="GTP CYCLOHYDROLASE II-RELATED"/>
    <property type="match status" value="1"/>
</dbReference>
<dbReference type="Pfam" id="PF00926">
    <property type="entry name" value="DHBP_synthase"/>
    <property type="match status" value="1"/>
</dbReference>
<dbReference type="SUPFAM" id="SSF55821">
    <property type="entry name" value="YrdC/RibB"/>
    <property type="match status" value="1"/>
</dbReference>
<evidence type="ECO:0000255" key="1">
    <source>
        <dbReference type="HAMAP-Rule" id="MF_00180"/>
    </source>
</evidence>
<accession>B8D8L7</accession>
<sequence>MNQTLLSKFGKPIERIKNAILALKSGQGVIILDDEERENEGDLVFACENMTVEQMALSIRYGSGIVCLCITESKRKQLNLPMMVKKNTSAYRTGFTVTIEASKGISTGVSAKDRLTTIKTAIADDAKPSDLNRPGHVFPLRAHKGGVLSRPGHTEAAIEIVSLAGFKPAGVICELTNKDGTMARTPEIIKFSENKKMQVLTIQDLIFYIKNINHL</sequence>
<name>RIBB_BUCA5</name>
<protein>
    <recommendedName>
        <fullName evidence="1">3,4-dihydroxy-2-butanone 4-phosphate synthase</fullName>
        <shortName evidence="1">DHBP synthase</shortName>
        <ecNumber evidence="1">4.1.99.12</ecNumber>
    </recommendedName>
</protein>